<proteinExistence type="inferred from homology"/>
<accession>B4QI55</accession>
<keyword id="KW-0489">Methyltransferase</keyword>
<keyword id="KW-1185">Reference proteome</keyword>
<keyword id="KW-0677">Repeat</keyword>
<keyword id="KW-0949">S-adenosyl-L-methionine</keyword>
<keyword id="KW-0808">Transferase</keyword>
<comment type="function">
    <text evidence="1">Essential arginine methyltransferase that can both catalyze the formation of omega-N monomethylarginine (MMA) and symmetrical dimethylarginine (sDMA). Specifically mediates the symmetrical dimethylation of arginine residues in the small nuclear ribonucleoproteins SmD1 and SmD3 (By similarity).</text>
</comment>
<comment type="similarity">
    <text evidence="2">Belongs to the class I-like SAM-binding methyltransferase superfamily. Protein arginine N-methyltransferase family. PRMT7 subfamily.</text>
</comment>
<sequence>MLRNFLKSRFLAPRGMSCFSQVMNPITGQNSWQERGDDYDYHLEVANAGFGDMLHDWERNQKYFAALRKTIAGMREAGREVHVLDIGTGTGILSMMALAAGADSVTACEAFLPMANCAEKILAANGAGDKVRLIRKRSTEIQVGEDMPRKANLLVAELLDTELIGEGAIGIYNHAHAELLTEDALCIPARARCYAQVAQSPLAAQWNSLKTIANLDGEPLLHPPEQLKSCQGEAALHDVQLSQLPSSAFRPLTDPVEIFQFDFQRKQEREKQRAQLLKLQSKQPGAAELVFYWWDIQLDDGGEILLSCAPYWAHPQLKELAAEKAKDHPLPNVVPWRDHWMQAIYYIPKPLQLLEAGKSFHLSCHHDEYSLWFDAREEAPTKSVRRHTCTCDLHMTYSRSRIGQLNQSPRNKRYLRYLEESIEAEKSNVLVLGNGCLLGLASSALGAASVLLHEPHRFSRRLLESIVKHNQLKNVHFLDKVEELEDSQLAALTHIFAEPYFLNAILPWDNFYFGTLLTKIKDKLPEGVKILPCSARIYALPVEFLDLHKIRAPVGSCEGFDLRLFDEMVERSAEQAVSLVEAQPLWEYPCRALSEPQEVLSVDFSNFGQEHSLKGSIELKHTGICNGVALWVDWKLVEDNSPRSIVSSGPSEPVVPGEFVKWDMFVRQGVHFPRKPKDAVTHLEWSTDFKPLLGELNFSFGQKKL</sequence>
<reference key="1">
    <citation type="journal article" date="2007" name="Nature">
        <title>Evolution of genes and genomes on the Drosophila phylogeny.</title>
        <authorList>
            <consortium name="Drosophila 12 genomes consortium"/>
        </authorList>
    </citation>
    <scope>NUCLEOTIDE SEQUENCE [LARGE SCALE GENOMIC DNA]</scope>
</reference>
<evidence type="ECO:0000250" key="1"/>
<evidence type="ECO:0000255" key="2">
    <source>
        <dbReference type="PROSITE-ProRule" id="PRU01015"/>
    </source>
</evidence>
<name>ANM7_DROSI</name>
<protein>
    <recommendedName>
        <fullName>Protein arginine N-methyltransferase 7</fullName>
        <ecNumber>2.1.1.-</ecNumber>
    </recommendedName>
</protein>
<gene>
    <name type="primary">Art7</name>
    <name type="ORF">GD25084</name>
</gene>
<feature type="chain" id="PRO_0000373919" description="Protein arginine N-methyltransferase 7">
    <location>
        <begin position="1"/>
        <end position="705"/>
    </location>
</feature>
<feature type="domain" description="SAM-dependent MTase PRMT-type 1" evidence="2">
    <location>
        <begin position="29"/>
        <end position="372"/>
    </location>
</feature>
<feature type="domain" description="SAM-dependent MTase PRMT-type 2" evidence="2">
    <location>
        <begin position="381"/>
        <end position="705"/>
    </location>
</feature>
<organism>
    <name type="scientific">Drosophila simulans</name>
    <name type="common">Fruit fly</name>
    <dbReference type="NCBI Taxonomy" id="7240"/>
    <lineage>
        <taxon>Eukaryota</taxon>
        <taxon>Metazoa</taxon>
        <taxon>Ecdysozoa</taxon>
        <taxon>Arthropoda</taxon>
        <taxon>Hexapoda</taxon>
        <taxon>Insecta</taxon>
        <taxon>Pterygota</taxon>
        <taxon>Neoptera</taxon>
        <taxon>Endopterygota</taxon>
        <taxon>Diptera</taxon>
        <taxon>Brachycera</taxon>
        <taxon>Muscomorpha</taxon>
        <taxon>Ephydroidea</taxon>
        <taxon>Drosophilidae</taxon>
        <taxon>Drosophila</taxon>
        <taxon>Sophophora</taxon>
    </lineage>
</organism>
<dbReference type="EC" id="2.1.1.-"/>
<dbReference type="EMBL" id="CM000362">
    <property type="protein sequence ID" value="EDX08309.1"/>
    <property type="molecule type" value="Genomic_DNA"/>
</dbReference>
<dbReference type="SMR" id="B4QI55"/>
<dbReference type="STRING" id="7240.B4QI55"/>
<dbReference type="EnsemblMetazoa" id="FBtr0224994">
    <property type="protein sequence ID" value="FBpp0223486"/>
    <property type="gene ID" value="FBgn0196396"/>
</dbReference>
<dbReference type="EnsemblMetazoa" id="XM_002082688.3">
    <property type="protein sequence ID" value="XP_002082724.1"/>
    <property type="gene ID" value="LOC6735814"/>
</dbReference>
<dbReference type="GeneID" id="6735814"/>
<dbReference type="CTD" id="37664"/>
<dbReference type="HOGENOM" id="CLU_015180_0_0_1"/>
<dbReference type="OMA" id="CHHDEYS"/>
<dbReference type="OrthoDB" id="412876at2759"/>
<dbReference type="PhylomeDB" id="B4QI55"/>
<dbReference type="Proteomes" id="UP000000304">
    <property type="component" value="Chromosome 2R"/>
</dbReference>
<dbReference type="Bgee" id="FBgn0196396">
    <property type="expression patterns" value="Expressed in male reproductive system and 3 other cell types or tissues"/>
</dbReference>
<dbReference type="GO" id="GO:0042054">
    <property type="term" value="F:histone methyltransferase activity"/>
    <property type="evidence" value="ECO:0007669"/>
    <property type="project" value="TreeGrafter"/>
</dbReference>
<dbReference type="GO" id="GO:0035243">
    <property type="term" value="F:protein-arginine omega-N symmetric methyltransferase activity"/>
    <property type="evidence" value="ECO:0000250"/>
    <property type="project" value="UniProtKB"/>
</dbReference>
<dbReference type="GO" id="GO:0018216">
    <property type="term" value="P:peptidyl-arginine methylation"/>
    <property type="evidence" value="ECO:0000250"/>
    <property type="project" value="UniProtKB"/>
</dbReference>
<dbReference type="CDD" id="cd02440">
    <property type="entry name" value="AdoMet_MTases"/>
    <property type="match status" value="1"/>
</dbReference>
<dbReference type="FunFam" id="2.70.160.11:FF:000014">
    <property type="entry name" value="Protein arginine N-methyltransferase 7"/>
    <property type="match status" value="1"/>
</dbReference>
<dbReference type="FunFam" id="2.70.160.11:FF:000019">
    <property type="entry name" value="Protein arginine N-methyltransferase 7"/>
    <property type="match status" value="1"/>
</dbReference>
<dbReference type="FunFam" id="3.40.50.150:FF:000070">
    <property type="entry name" value="Protein arginine N-methyltransferase 7"/>
    <property type="match status" value="1"/>
</dbReference>
<dbReference type="FunFam" id="3.40.50.150:FF:000071">
    <property type="entry name" value="Protein arginine N-methyltransferase 7"/>
    <property type="match status" value="1"/>
</dbReference>
<dbReference type="Gene3D" id="2.70.160.11">
    <property type="entry name" value="Hnrnp arginine n-methyltransferase1"/>
    <property type="match status" value="2"/>
</dbReference>
<dbReference type="Gene3D" id="3.40.50.150">
    <property type="entry name" value="Vaccinia Virus protein VP39"/>
    <property type="match status" value="2"/>
</dbReference>
<dbReference type="InterPro" id="IPR025799">
    <property type="entry name" value="Arg_MeTrfase"/>
</dbReference>
<dbReference type="InterPro" id="IPR014644">
    <property type="entry name" value="MeTrfase_PRMT7"/>
</dbReference>
<dbReference type="InterPro" id="IPR055135">
    <property type="entry name" value="PRMT_dom"/>
</dbReference>
<dbReference type="InterPro" id="IPR029063">
    <property type="entry name" value="SAM-dependent_MTases_sf"/>
</dbReference>
<dbReference type="PANTHER" id="PTHR11006">
    <property type="entry name" value="PROTEIN ARGININE N-METHYLTRANSFERASE"/>
    <property type="match status" value="1"/>
</dbReference>
<dbReference type="PANTHER" id="PTHR11006:SF4">
    <property type="entry name" value="PROTEIN ARGININE N-METHYLTRANSFERASE 7"/>
    <property type="match status" value="1"/>
</dbReference>
<dbReference type="Pfam" id="PF06325">
    <property type="entry name" value="PrmA"/>
    <property type="match status" value="1"/>
</dbReference>
<dbReference type="Pfam" id="PF22528">
    <property type="entry name" value="PRMT_C"/>
    <property type="match status" value="1"/>
</dbReference>
<dbReference type="PIRSF" id="PIRSF036946">
    <property type="entry name" value="Arg_N-mtase"/>
    <property type="match status" value="1"/>
</dbReference>
<dbReference type="SUPFAM" id="SSF53335">
    <property type="entry name" value="S-adenosyl-L-methionine-dependent methyltransferases"/>
    <property type="match status" value="2"/>
</dbReference>
<dbReference type="PROSITE" id="PS51678">
    <property type="entry name" value="SAM_MT_PRMT"/>
    <property type="match status" value="2"/>
</dbReference>